<keyword id="KW-1015">Disulfide bond</keyword>
<keyword id="KW-0325">Glycoprotein</keyword>
<keyword id="KW-0393">Immunoglobulin domain</keyword>
<keyword id="KW-0433">Leucine-rich repeat</keyword>
<keyword id="KW-0472">Membrane</keyword>
<keyword id="KW-1185">Reference proteome</keyword>
<keyword id="KW-0677">Repeat</keyword>
<keyword id="KW-0732">Signal</keyword>
<keyword id="KW-0812">Transmembrane</keyword>
<keyword id="KW-1133">Transmembrane helix</keyword>
<evidence type="ECO:0000255" key="1"/>
<evidence type="ECO:0000255" key="2">
    <source>
        <dbReference type="PROSITE-ProRule" id="PRU00114"/>
    </source>
</evidence>
<evidence type="ECO:0000256" key="3">
    <source>
        <dbReference type="SAM" id="MobiDB-lite"/>
    </source>
</evidence>
<evidence type="ECO:0000269" key="4">
    <source>
    </source>
</evidence>
<organism>
    <name type="scientific">Mus musculus</name>
    <name type="common">Mouse</name>
    <dbReference type="NCBI Taxonomy" id="10090"/>
    <lineage>
        <taxon>Eukaryota</taxon>
        <taxon>Metazoa</taxon>
        <taxon>Chordata</taxon>
        <taxon>Craniata</taxon>
        <taxon>Vertebrata</taxon>
        <taxon>Euteleostomi</taxon>
        <taxon>Mammalia</taxon>
        <taxon>Eutheria</taxon>
        <taxon>Euarchontoglires</taxon>
        <taxon>Glires</taxon>
        <taxon>Rodentia</taxon>
        <taxon>Myomorpha</taxon>
        <taxon>Muroidea</taxon>
        <taxon>Muridae</taxon>
        <taxon>Murinae</taxon>
        <taxon>Mus</taxon>
        <taxon>Mus</taxon>
    </lineage>
</organism>
<name>LRIT2_MOUSE</name>
<gene>
    <name type="primary">Lrit2</name>
    <name type="synonym">Lrrc22</name>
</gene>
<proteinExistence type="evidence at protein level"/>
<accession>Q6PFC5</accession>
<sequence length="549" mass="61360">MAFVFYCFLQVLVSWVIHAVQPFCLPECTCSEESFGRSLQCMSMSLGKIPDNFPEELKQVRIENSPLFELSQGFFTNMSSLEYLWLNFNNVTVIHLGALEDLPELRELRLEGNKLRSVPWTAFRATPLLRVLDLKHNRIDSVPELALQFLTNLIYLDISSNRLTVVSKGVFLNWPAYQKRQQLGCGAEFLSNMVLSLHNNPWLCDCRLRGLAQFVKSVGPPFILVNSYLVCQGPVSKAGQLLHETELGVCMKPTISTPSVNVTIQVGKNVTLQCFAQASPSPTIAWKYPLSTWREFDVLASPIAEGIILSQLVIPAAQLVDGGNYTCMAFNSIGRSSLVILLYVQPAQAMPGLHFLSTSSEVSAYVDLRVVKQTVHGILLQWLTVTNLAEEQWFTLYITSDEALRKKVVHIGPGINTYAVDDLLPATKYKACLSLRNQPPSQGQCVVFVTGKDSGGLEGREHLLHVTVVLCAVLLALPVGAYVWVSQGPYNFSEWCWRRCPLHRKTLRCPQAVPQCKDNSFKDPSGVYEDGESHRVMEEDEEVEKEGIS</sequence>
<comment type="subunit">
    <text evidence="4">Interacts with LRIT1; may form a heterodimer with LRIT1.</text>
</comment>
<comment type="subcellular location">
    <subcellularLocation>
        <location>Membrane</location>
        <topology>Single-pass type I membrane protein</topology>
    </subcellularLocation>
</comment>
<dbReference type="EMBL" id="BC057628">
    <property type="protein sequence ID" value="AAH57628.1"/>
    <property type="molecule type" value="mRNA"/>
</dbReference>
<dbReference type="CCDS" id="CCDS26951.1"/>
<dbReference type="RefSeq" id="NP_775594.1">
    <property type="nucleotide sequence ID" value="NM_173418.5"/>
</dbReference>
<dbReference type="SMR" id="Q6PFC5"/>
<dbReference type="FunCoup" id="Q6PFC5">
    <property type="interactions" value="1"/>
</dbReference>
<dbReference type="STRING" id="10090.ENSMUSP00000056642"/>
<dbReference type="GlyCosmos" id="Q6PFC5">
    <property type="glycosylation" value="3 sites, No reported glycans"/>
</dbReference>
<dbReference type="GlyGen" id="Q6PFC5">
    <property type="glycosylation" value="3 sites"/>
</dbReference>
<dbReference type="iPTMnet" id="Q6PFC5"/>
<dbReference type="PhosphoSitePlus" id="Q6PFC5"/>
<dbReference type="PaxDb" id="10090-ENSMUSP00000056642"/>
<dbReference type="ProteomicsDB" id="287272"/>
<dbReference type="Antibodypedia" id="48881">
    <property type="antibodies" value="7 antibodies from 6 providers"/>
</dbReference>
<dbReference type="DNASU" id="239038"/>
<dbReference type="Ensembl" id="ENSMUST00000057176.5">
    <property type="protein sequence ID" value="ENSMUSP00000056642.4"/>
    <property type="gene ID" value="ENSMUSG00000043418.5"/>
</dbReference>
<dbReference type="GeneID" id="239038"/>
<dbReference type="KEGG" id="mmu:239038"/>
<dbReference type="UCSC" id="uc007tbs.1">
    <property type="organism name" value="mouse"/>
</dbReference>
<dbReference type="AGR" id="MGI:2444885"/>
<dbReference type="CTD" id="340745"/>
<dbReference type="MGI" id="MGI:2444885">
    <property type="gene designation" value="Lrit2"/>
</dbReference>
<dbReference type="VEuPathDB" id="HostDB:ENSMUSG00000043418"/>
<dbReference type="eggNOG" id="KOG0619">
    <property type="taxonomic scope" value="Eukaryota"/>
</dbReference>
<dbReference type="GeneTree" id="ENSGT00940000159143"/>
<dbReference type="HOGENOM" id="CLU_034556_1_0_1"/>
<dbReference type="InParanoid" id="Q6PFC5"/>
<dbReference type="OMA" id="GITLEWH"/>
<dbReference type="OrthoDB" id="1099686at2759"/>
<dbReference type="PhylomeDB" id="Q6PFC5"/>
<dbReference type="TreeFam" id="TF330861"/>
<dbReference type="BioGRID-ORCS" id="239038">
    <property type="hits" value="2 hits in 77 CRISPR screens"/>
</dbReference>
<dbReference type="PRO" id="PR:Q6PFC5"/>
<dbReference type="Proteomes" id="UP000000589">
    <property type="component" value="Chromosome 14"/>
</dbReference>
<dbReference type="RNAct" id="Q6PFC5">
    <property type="molecule type" value="protein"/>
</dbReference>
<dbReference type="Bgee" id="ENSMUSG00000043418">
    <property type="expression patterns" value="Expressed in retinal neural layer and 10 other cell types or tissues"/>
</dbReference>
<dbReference type="GO" id="GO:0016020">
    <property type="term" value="C:membrane"/>
    <property type="evidence" value="ECO:0007669"/>
    <property type="project" value="UniProtKB-SubCell"/>
</dbReference>
<dbReference type="Gene3D" id="2.60.40.10">
    <property type="entry name" value="Immunoglobulins"/>
    <property type="match status" value="1"/>
</dbReference>
<dbReference type="Gene3D" id="3.80.10.10">
    <property type="entry name" value="Ribonuclease Inhibitor"/>
    <property type="match status" value="1"/>
</dbReference>
<dbReference type="InterPro" id="IPR000483">
    <property type="entry name" value="Cys-rich_flank_reg_C"/>
</dbReference>
<dbReference type="InterPro" id="IPR036116">
    <property type="entry name" value="FN3_sf"/>
</dbReference>
<dbReference type="InterPro" id="IPR007110">
    <property type="entry name" value="Ig-like_dom"/>
</dbReference>
<dbReference type="InterPro" id="IPR036179">
    <property type="entry name" value="Ig-like_dom_sf"/>
</dbReference>
<dbReference type="InterPro" id="IPR013783">
    <property type="entry name" value="Ig-like_fold"/>
</dbReference>
<dbReference type="InterPro" id="IPR003599">
    <property type="entry name" value="Ig_sub"/>
</dbReference>
<dbReference type="InterPro" id="IPR003598">
    <property type="entry name" value="Ig_sub2"/>
</dbReference>
<dbReference type="InterPro" id="IPR001611">
    <property type="entry name" value="Leu-rich_rpt"/>
</dbReference>
<dbReference type="InterPro" id="IPR003591">
    <property type="entry name" value="Leu-rich_rpt_typical-subtyp"/>
</dbReference>
<dbReference type="InterPro" id="IPR050467">
    <property type="entry name" value="LRFN"/>
</dbReference>
<dbReference type="InterPro" id="IPR032675">
    <property type="entry name" value="LRR_dom_sf"/>
</dbReference>
<dbReference type="PANTHER" id="PTHR45842:SF14">
    <property type="entry name" value="LEUCINE-RICH REPEAT, IMMUNOGLOBULIN-LIKE DOMAIN AND TRANSMEMBRANE DOMAIN-CONTAINING PROTEIN 2"/>
    <property type="match status" value="1"/>
</dbReference>
<dbReference type="PANTHER" id="PTHR45842">
    <property type="entry name" value="SYNAPTIC ADHESION-LIKE MOLECULE SALM"/>
    <property type="match status" value="1"/>
</dbReference>
<dbReference type="Pfam" id="PF13927">
    <property type="entry name" value="Ig_3"/>
    <property type="match status" value="1"/>
</dbReference>
<dbReference type="Pfam" id="PF13855">
    <property type="entry name" value="LRR_8"/>
    <property type="match status" value="2"/>
</dbReference>
<dbReference type="SMART" id="SM00409">
    <property type="entry name" value="IG"/>
    <property type="match status" value="1"/>
</dbReference>
<dbReference type="SMART" id="SM00408">
    <property type="entry name" value="IGc2"/>
    <property type="match status" value="1"/>
</dbReference>
<dbReference type="SMART" id="SM00369">
    <property type="entry name" value="LRR_TYP"/>
    <property type="match status" value="4"/>
</dbReference>
<dbReference type="SMART" id="SM00082">
    <property type="entry name" value="LRRCT"/>
    <property type="match status" value="1"/>
</dbReference>
<dbReference type="SUPFAM" id="SSF49265">
    <property type="entry name" value="Fibronectin type III"/>
    <property type="match status" value="1"/>
</dbReference>
<dbReference type="SUPFAM" id="SSF48726">
    <property type="entry name" value="Immunoglobulin"/>
    <property type="match status" value="1"/>
</dbReference>
<dbReference type="SUPFAM" id="SSF52058">
    <property type="entry name" value="L domain-like"/>
    <property type="match status" value="1"/>
</dbReference>
<dbReference type="PROSITE" id="PS50835">
    <property type="entry name" value="IG_LIKE"/>
    <property type="match status" value="1"/>
</dbReference>
<dbReference type="PROSITE" id="PS51450">
    <property type="entry name" value="LRR"/>
    <property type="match status" value="4"/>
</dbReference>
<protein>
    <recommendedName>
        <fullName>Leucine-rich repeat, immunoglobulin-like domain and transmembrane domain-containing protein 2</fullName>
    </recommendedName>
    <alternativeName>
        <fullName>Leucine-rich repeat-containing protein 22</fullName>
    </alternativeName>
</protein>
<feature type="signal peptide" evidence="1">
    <location>
        <begin position="1"/>
        <end position="22"/>
    </location>
</feature>
<feature type="chain" id="PRO_0000309345" description="Leucine-rich repeat, immunoglobulin-like domain and transmembrane domain-containing protein 2">
    <location>
        <begin position="23"/>
        <end position="549"/>
    </location>
</feature>
<feature type="transmembrane region" description="Helical" evidence="1">
    <location>
        <begin position="463"/>
        <end position="483"/>
    </location>
</feature>
<feature type="domain" description="LRRNT">
    <location>
        <begin position="23"/>
        <end position="54"/>
    </location>
</feature>
<feature type="repeat" description="LRR 1">
    <location>
        <begin position="80"/>
        <end position="103"/>
    </location>
</feature>
<feature type="repeat" description="LRR 2">
    <location>
        <begin position="104"/>
        <end position="125"/>
    </location>
</feature>
<feature type="repeat" description="LRR 3">
    <location>
        <begin position="128"/>
        <end position="149"/>
    </location>
</feature>
<feature type="repeat" description="LRR 4">
    <location>
        <begin position="152"/>
        <end position="173"/>
    </location>
</feature>
<feature type="domain" description="LRRCT">
    <location>
        <begin position="200"/>
        <end position="252"/>
    </location>
</feature>
<feature type="domain" description="Ig-like">
    <location>
        <begin position="253"/>
        <end position="339"/>
    </location>
</feature>
<feature type="domain" description="Fibronectin type-III">
    <location>
        <begin position="361"/>
        <end position="447"/>
    </location>
</feature>
<feature type="region of interest" description="Disordered" evidence="3">
    <location>
        <begin position="521"/>
        <end position="549"/>
    </location>
</feature>
<feature type="compositionally biased region" description="Acidic residues" evidence="3">
    <location>
        <begin position="538"/>
        <end position="549"/>
    </location>
</feature>
<feature type="glycosylation site" description="N-linked (GlcNAc...) asparagine" evidence="1">
    <location>
        <position position="90"/>
    </location>
</feature>
<feature type="glycosylation site" description="N-linked (GlcNAc...) asparagine" evidence="1">
    <location>
        <position position="261"/>
    </location>
</feature>
<feature type="glycosylation site" description="N-linked (GlcNAc...) asparagine" evidence="1">
    <location>
        <position position="491"/>
    </location>
</feature>
<feature type="disulfide bond" evidence="2">
    <location>
        <begin position="274"/>
        <end position="327"/>
    </location>
</feature>
<reference key="1">
    <citation type="journal article" date="2004" name="Genome Res.">
        <title>The status, quality, and expansion of the NIH full-length cDNA project: the Mammalian Gene Collection (MGC).</title>
        <authorList>
            <consortium name="The MGC Project Team"/>
        </authorList>
    </citation>
    <scope>NUCLEOTIDE SEQUENCE [LARGE SCALE MRNA]</scope>
    <source>
        <tissue>Eye</tissue>
    </source>
</reference>
<reference key="2">
    <citation type="journal article" date="2018" name="Cell Rep.">
        <title>Lrit1, a Retinal Transmembrane Protein, Regulates Selective Synapse Formation in Cone Photoreceptor Cells and Visual Acuity.</title>
        <authorList>
            <person name="Ueno A."/>
            <person name="Omori Y."/>
            <person name="Sugita Y."/>
            <person name="Watanabe S."/>
            <person name="Chaya T."/>
            <person name="Kozuka T."/>
            <person name="Kon T."/>
            <person name="Yoshida S."/>
            <person name="Matsushita K."/>
            <person name="Kuwahara R."/>
            <person name="Kajimura N."/>
            <person name="Okada Y."/>
            <person name="Furukawa T."/>
        </authorList>
    </citation>
    <scope>INTERACTION WITH LRIT1</scope>
</reference>